<dbReference type="EC" id="5.3.1.1" evidence="1"/>
<dbReference type="EMBL" id="CR543861">
    <property type="protein sequence ID" value="CAG67313.1"/>
    <property type="molecule type" value="Genomic_DNA"/>
</dbReference>
<dbReference type="RefSeq" id="WP_004920470.1">
    <property type="nucleotide sequence ID" value="NC_005966.1"/>
</dbReference>
<dbReference type="SMR" id="Q6FF44"/>
<dbReference type="STRING" id="202950.GCA_001485005_00625"/>
<dbReference type="GeneID" id="45232866"/>
<dbReference type="KEGG" id="aci:ACIAD0363"/>
<dbReference type="eggNOG" id="COG0149">
    <property type="taxonomic scope" value="Bacteria"/>
</dbReference>
<dbReference type="HOGENOM" id="CLU_024251_2_1_6"/>
<dbReference type="OrthoDB" id="9809429at2"/>
<dbReference type="BioCyc" id="ASP62977:ACIAD_RS01690-MONOMER"/>
<dbReference type="UniPathway" id="UPA00109">
    <property type="reaction ID" value="UER00189"/>
</dbReference>
<dbReference type="UniPathway" id="UPA00138"/>
<dbReference type="Proteomes" id="UP000000430">
    <property type="component" value="Chromosome"/>
</dbReference>
<dbReference type="GO" id="GO:0005829">
    <property type="term" value="C:cytosol"/>
    <property type="evidence" value="ECO:0007669"/>
    <property type="project" value="TreeGrafter"/>
</dbReference>
<dbReference type="GO" id="GO:0004807">
    <property type="term" value="F:triose-phosphate isomerase activity"/>
    <property type="evidence" value="ECO:0007669"/>
    <property type="project" value="UniProtKB-UniRule"/>
</dbReference>
<dbReference type="GO" id="GO:0006094">
    <property type="term" value="P:gluconeogenesis"/>
    <property type="evidence" value="ECO:0007669"/>
    <property type="project" value="UniProtKB-UniRule"/>
</dbReference>
<dbReference type="GO" id="GO:0046166">
    <property type="term" value="P:glyceraldehyde-3-phosphate biosynthetic process"/>
    <property type="evidence" value="ECO:0007669"/>
    <property type="project" value="TreeGrafter"/>
</dbReference>
<dbReference type="GO" id="GO:0019563">
    <property type="term" value="P:glycerol catabolic process"/>
    <property type="evidence" value="ECO:0007669"/>
    <property type="project" value="TreeGrafter"/>
</dbReference>
<dbReference type="GO" id="GO:0006096">
    <property type="term" value="P:glycolytic process"/>
    <property type="evidence" value="ECO:0007669"/>
    <property type="project" value="UniProtKB-UniRule"/>
</dbReference>
<dbReference type="CDD" id="cd00311">
    <property type="entry name" value="TIM"/>
    <property type="match status" value="1"/>
</dbReference>
<dbReference type="FunFam" id="3.20.20.70:FF:000016">
    <property type="entry name" value="Triosephosphate isomerase"/>
    <property type="match status" value="1"/>
</dbReference>
<dbReference type="Gene3D" id="3.20.20.70">
    <property type="entry name" value="Aldolase class I"/>
    <property type="match status" value="1"/>
</dbReference>
<dbReference type="HAMAP" id="MF_00147_B">
    <property type="entry name" value="TIM_B"/>
    <property type="match status" value="1"/>
</dbReference>
<dbReference type="InterPro" id="IPR013785">
    <property type="entry name" value="Aldolase_TIM"/>
</dbReference>
<dbReference type="InterPro" id="IPR035990">
    <property type="entry name" value="TIM_sf"/>
</dbReference>
<dbReference type="InterPro" id="IPR022896">
    <property type="entry name" value="TrioseP_Isoase_bac/euk"/>
</dbReference>
<dbReference type="InterPro" id="IPR000652">
    <property type="entry name" value="Triosephosphate_isomerase"/>
</dbReference>
<dbReference type="InterPro" id="IPR020861">
    <property type="entry name" value="Triosephosphate_isomerase_AS"/>
</dbReference>
<dbReference type="NCBIfam" id="TIGR00419">
    <property type="entry name" value="tim"/>
    <property type="match status" value="1"/>
</dbReference>
<dbReference type="PANTHER" id="PTHR21139">
    <property type="entry name" value="TRIOSEPHOSPHATE ISOMERASE"/>
    <property type="match status" value="1"/>
</dbReference>
<dbReference type="PANTHER" id="PTHR21139:SF42">
    <property type="entry name" value="TRIOSEPHOSPHATE ISOMERASE"/>
    <property type="match status" value="1"/>
</dbReference>
<dbReference type="Pfam" id="PF00121">
    <property type="entry name" value="TIM"/>
    <property type="match status" value="1"/>
</dbReference>
<dbReference type="SUPFAM" id="SSF51351">
    <property type="entry name" value="Triosephosphate isomerase (TIM)"/>
    <property type="match status" value="1"/>
</dbReference>
<dbReference type="PROSITE" id="PS00171">
    <property type="entry name" value="TIM_1"/>
    <property type="match status" value="1"/>
</dbReference>
<dbReference type="PROSITE" id="PS51440">
    <property type="entry name" value="TIM_2"/>
    <property type="match status" value="1"/>
</dbReference>
<comment type="function">
    <text evidence="1">Involved in the gluconeogenesis. Catalyzes stereospecifically the conversion of dihydroxyacetone phosphate (DHAP) to D-glyceraldehyde-3-phosphate (G3P).</text>
</comment>
<comment type="catalytic activity">
    <reaction evidence="1">
        <text>D-glyceraldehyde 3-phosphate = dihydroxyacetone phosphate</text>
        <dbReference type="Rhea" id="RHEA:18585"/>
        <dbReference type="ChEBI" id="CHEBI:57642"/>
        <dbReference type="ChEBI" id="CHEBI:59776"/>
        <dbReference type="EC" id="5.3.1.1"/>
    </reaction>
</comment>
<comment type="pathway">
    <text evidence="1">Carbohydrate biosynthesis; gluconeogenesis.</text>
</comment>
<comment type="pathway">
    <text evidence="1">Carbohydrate degradation; glycolysis; D-glyceraldehyde 3-phosphate from glycerone phosphate: step 1/1.</text>
</comment>
<comment type="subunit">
    <text evidence="1">Homodimer.</text>
</comment>
<comment type="subcellular location">
    <subcellularLocation>
        <location evidence="1">Cytoplasm</location>
    </subcellularLocation>
</comment>
<comment type="similarity">
    <text evidence="1">Belongs to the triosephosphate isomerase family.</text>
</comment>
<sequence length="265" mass="28515">MSGSTIIPWVVGNWKMNPKQSDAIQLVQQFKDLLKQQPISEQYCHVGVAPIAIALTTIQSELATANRQVATVAQDVSRFAGTGAYTGEISAELLTDSQIRYVLIGHSERRDLLGDHVEILKAKLSHALNAGMTVIYCVGESLEQREQGLAEQIVLQQICDIAPVVSAEQWQHQIVIAYEPIWAIGTGRTASPEDAQAIHAKIREGLCQITPAGSQIALLYGGSVKPENAVELAACPDINGALVGGASLNAESFYKIAQAFAQTQQ</sequence>
<protein>
    <recommendedName>
        <fullName evidence="1">Triosephosphate isomerase</fullName>
        <shortName evidence="1">TIM</shortName>
        <shortName evidence="1">TPI</shortName>
        <ecNumber evidence="1">5.3.1.1</ecNumber>
    </recommendedName>
    <alternativeName>
        <fullName evidence="1">Triose-phosphate isomerase</fullName>
    </alternativeName>
</protein>
<keyword id="KW-0963">Cytoplasm</keyword>
<keyword id="KW-0312">Gluconeogenesis</keyword>
<keyword id="KW-0324">Glycolysis</keyword>
<keyword id="KW-0413">Isomerase</keyword>
<reference key="1">
    <citation type="journal article" date="2004" name="Nucleic Acids Res.">
        <title>Unique features revealed by the genome sequence of Acinetobacter sp. ADP1, a versatile and naturally transformation competent bacterium.</title>
        <authorList>
            <person name="Barbe V."/>
            <person name="Vallenet D."/>
            <person name="Fonknechten N."/>
            <person name="Kreimeyer A."/>
            <person name="Oztas S."/>
            <person name="Labarre L."/>
            <person name="Cruveiller S."/>
            <person name="Robert C."/>
            <person name="Duprat S."/>
            <person name="Wincker P."/>
            <person name="Ornston L.N."/>
            <person name="Weissenbach J."/>
            <person name="Marliere P."/>
            <person name="Cohen G.N."/>
            <person name="Medigue C."/>
        </authorList>
    </citation>
    <scope>NUCLEOTIDE SEQUENCE [LARGE SCALE GENOMIC DNA]</scope>
    <source>
        <strain>ATCC 33305 / BD413 / ADP1</strain>
    </source>
</reference>
<accession>Q6FF44</accession>
<organism>
    <name type="scientific">Acinetobacter baylyi (strain ATCC 33305 / BD413 / ADP1)</name>
    <dbReference type="NCBI Taxonomy" id="62977"/>
    <lineage>
        <taxon>Bacteria</taxon>
        <taxon>Pseudomonadati</taxon>
        <taxon>Pseudomonadota</taxon>
        <taxon>Gammaproteobacteria</taxon>
        <taxon>Moraxellales</taxon>
        <taxon>Moraxellaceae</taxon>
        <taxon>Acinetobacter</taxon>
    </lineage>
</organism>
<evidence type="ECO:0000255" key="1">
    <source>
        <dbReference type="HAMAP-Rule" id="MF_00147"/>
    </source>
</evidence>
<feature type="chain" id="PRO_0000307419" description="Triosephosphate isomerase">
    <location>
        <begin position="1"/>
        <end position="265"/>
    </location>
</feature>
<feature type="active site" description="Electrophile" evidence="1">
    <location>
        <position position="106"/>
    </location>
</feature>
<feature type="active site" description="Proton acceptor" evidence="1">
    <location>
        <position position="179"/>
    </location>
</feature>
<feature type="binding site" evidence="1">
    <location>
        <begin position="13"/>
        <end position="15"/>
    </location>
    <ligand>
        <name>substrate</name>
    </ligand>
</feature>
<feature type="binding site" evidence="1">
    <location>
        <position position="185"/>
    </location>
    <ligand>
        <name>substrate</name>
    </ligand>
</feature>
<feature type="binding site" evidence="1">
    <location>
        <position position="223"/>
    </location>
    <ligand>
        <name>substrate</name>
    </ligand>
</feature>
<feature type="binding site" evidence="1">
    <location>
        <begin position="244"/>
        <end position="245"/>
    </location>
    <ligand>
        <name>substrate</name>
    </ligand>
</feature>
<proteinExistence type="inferred from homology"/>
<name>TPIS_ACIAD</name>
<gene>
    <name evidence="1" type="primary">tpiA</name>
    <name type="ordered locus">ACIAD0363</name>
</gene>